<name>SPTA1_MOUSE</name>
<reference key="1">
    <citation type="submission" date="1997-01" db="EMBL/GenBank/DDBJ databases">
        <authorList>
            <person name="Burnett R.C."/>
            <person name="Avery A.C."/>
            <person name="Swardson C.J."/>
        </authorList>
    </citation>
    <scope>NUCLEOTIDE SEQUENCE [MRNA]</scope>
    <source>
        <strain>BALB/cJ</strain>
    </source>
</reference>
<reference key="2">
    <citation type="submission" date="1998-09" db="EMBL/GenBank/DDBJ databases">
        <authorList>
            <person name="Birkenmeier C.S."/>
            <person name="Gifford E.J."/>
            <person name="Barker J.E."/>
        </authorList>
    </citation>
    <scope>NUCLEOTIDE SEQUENCE [MRNA]</scope>
    <source>
        <strain>C57BL/6J</strain>
    </source>
</reference>
<reference key="3">
    <citation type="journal article" date="2009" name="PLoS Biol.">
        <title>Lineage-specific biology revealed by a finished genome assembly of the mouse.</title>
        <authorList>
            <person name="Church D.M."/>
            <person name="Goodstadt L."/>
            <person name="Hillier L.W."/>
            <person name="Zody M.C."/>
            <person name="Goldstein S."/>
            <person name="She X."/>
            <person name="Bult C.J."/>
            <person name="Agarwala R."/>
            <person name="Cherry J.L."/>
            <person name="DiCuccio M."/>
            <person name="Hlavina W."/>
            <person name="Kapustin Y."/>
            <person name="Meric P."/>
            <person name="Maglott D."/>
            <person name="Birtle Z."/>
            <person name="Marques A.C."/>
            <person name="Graves T."/>
            <person name="Zhou S."/>
            <person name="Teague B."/>
            <person name="Potamousis K."/>
            <person name="Churas C."/>
            <person name="Place M."/>
            <person name="Herschleb J."/>
            <person name="Runnheim R."/>
            <person name="Forrest D."/>
            <person name="Amos-Landgraf J."/>
            <person name="Schwartz D.C."/>
            <person name="Cheng Z."/>
            <person name="Lindblad-Toh K."/>
            <person name="Eichler E.E."/>
            <person name="Ponting C.P."/>
        </authorList>
    </citation>
    <scope>NUCLEOTIDE SEQUENCE [LARGE SCALE GENOMIC DNA]</scope>
    <source>
        <strain>C57BL/6J</strain>
    </source>
</reference>
<reference key="4">
    <citation type="journal article" date="2004" name="Genome Res.">
        <title>The status, quality, and expansion of the NIH full-length cDNA project: the Mammalian Gene Collection (MGC).</title>
        <authorList>
            <consortium name="The MGC Project Team"/>
        </authorList>
    </citation>
    <scope>NUCLEOTIDE SEQUENCE [LARGE SCALE MRNA]</scope>
</reference>
<reference key="5">
    <citation type="journal article" date="1985" name="Gene">
        <title>Sequence comparison of human and murine erythrocyte alpha-spectrin cDNA.</title>
        <authorList>
            <person name="Curtis P.J."/>
            <person name="Palumbo A."/>
            <person name="Ming J."/>
            <person name="Fraser P.J."/>
            <person name="Cioe L."/>
            <person name="Meo P."/>
            <person name="Shane S."/>
            <person name="Rovera G."/>
        </authorList>
    </citation>
    <scope>NUCLEOTIDE SEQUENCE [MRNA] OF 1567-1819</scope>
</reference>
<reference key="6">
    <citation type="journal article" date="2010" name="Cell">
        <title>A tissue-specific atlas of mouse protein phosphorylation and expression.</title>
        <authorList>
            <person name="Huttlin E.L."/>
            <person name="Jedrychowski M.P."/>
            <person name="Elias J.E."/>
            <person name="Goswami T."/>
            <person name="Rad R."/>
            <person name="Beausoleil S.A."/>
            <person name="Villen J."/>
            <person name="Haas W."/>
            <person name="Sowa M.E."/>
            <person name="Gygi S.P."/>
        </authorList>
    </citation>
    <scope>PHOSPHORYLATION [LARGE SCALE ANALYSIS] AT SER-257</scope>
    <scope>IDENTIFICATION BY MASS SPECTROMETRY [LARGE SCALE ANALYSIS]</scope>
    <source>
        <tissue>Brown adipose tissue</tissue>
        <tissue>Heart</tissue>
        <tissue>Kidney</tissue>
        <tissue>Liver</tissue>
        <tissue>Lung</tissue>
        <tissue>Spleen</tissue>
    </source>
</reference>
<comment type="function">
    <text>Spectrin is the major constituent of the cytoskeletal network underlying the erythrocyte plasma membrane. It associates with band 4.1 and actin to form the cytoskeletal superstructure of the erythrocyte plasma membrane.</text>
</comment>
<comment type="subunit">
    <text evidence="1">Composed of non-homologous chains, alpha and beta, which aggregate to form dimers, tetramers, and higher polymers. Interacts with FASLG (By similarity). Interacts with BCAM (By similarity).</text>
</comment>
<comment type="subcellular location">
    <subcellularLocation>
        <location>Cytoplasm</location>
        <location>Cytoskeleton</location>
    </subcellularLocation>
    <subcellularLocation>
        <location>Cytoplasm</location>
        <location>Cell cortex</location>
    </subcellularLocation>
</comment>
<comment type="miscellaneous">
    <text>This complex is anchored to the cytoplasmic face of the plasma membrane via another protein, ankyrin, which binds to beta-spectrin and mediates the binding of the whole complex to a transmembrane protein band 3. The interaction of erythrocyte spectrin with other proteins through specific binding domains lead to the formation of an extensive subplasmalemmal meshwork which is thought to be responsible for the maintenance of the biconcave shape of human erythrocytes, for the regulation of plasma membrane components and for the maintenance of the lipid asymmetry of the plasma membrane.</text>
</comment>
<comment type="similarity">
    <text evidence="5">Belongs to the spectrin family.</text>
</comment>
<gene>
    <name type="primary">Spta1</name>
    <name type="synonym">Spna1</name>
    <name type="synonym">Spta</name>
</gene>
<feature type="chain" id="PRO_0000073453" description="Spectrin alpha chain, erythrocytic 1">
    <location>
        <begin position="1"/>
        <end position="2415"/>
    </location>
</feature>
<feature type="repeat" description="Spectrin 1" evidence="2">
    <location>
        <begin position="52"/>
        <end position="152"/>
    </location>
</feature>
<feature type="repeat" description="Spectrin 2" evidence="2">
    <location>
        <begin position="157"/>
        <end position="259"/>
    </location>
</feature>
<feature type="repeat" description="Spectrin 3" evidence="2">
    <location>
        <begin position="263"/>
        <end position="365"/>
    </location>
</feature>
<feature type="repeat" description="Spectrin 4" evidence="2">
    <location>
        <begin position="370"/>
        <end position="471"/>
    </location>
</feature>
<feature type="repeat" description="Spectrin 5" evidence="2">
    <location>
        <begin position="475"/>
        <end position="576"/>
    </location>
</feature>
<feature type="repeat" description="Spectrin 6" evidence="2">
    <location>
        <begin position="580"/>
        <end position="681"/>
    </location>
</feature>
<feature type="repeat" description="Spectrin 7" evidence="2">
    <location>
        <begin position="686"/>
        <end position="787"/>
    </location>
</feature>
<feature type="repeat" description="Spectrin 8" evidence="2">
    <location>
        <begin position="792"/>
        <end position="894"/>
    </location>
</feature>
<feature type="repeat" description="Spectrin 9" evidence="2">
    <location>
        <begin position="898"/>
        <end position="967"/>
    </location>
</feature>
<feature type="domain" description="SH3" evidence="3">
    <location>
        <begin position="975"/>
        <end position="1034"/>
    </location>
</feature>
<feature type="repeat" description="Spectrin 10" evidence="2">
    <location>
        <begin position="1085"/>
        <end position="1177"/>
    </location>
</feature>
<feature type="repeat" description="Spectrin 11" evidence="2">
    <location>
        <begin position="1183"/>
        <end position="1285"/>
    </location>
</feature>
<feature type="repeat" description="Spectrin 12" evidence="2">
    <location>
        <begin position="1287"/>
        <end position="1390"/>
    </location>
</feature>
<feature type="repeat" description="Spectrin 13" evidence="2">
    <location>
        <begin position="1394"/>
        <end position="1489"/>
    </location>
</feature>
<feature type="repeat" description="Spectrin 14" evidence="2">
    <location>
        <begin position="1499"/>
        <end position="1603"/>
    </location>
</feature>
<feature type="repeat" description="Spectrin 15" evidence="2">
    <location>
        <begin position="1606"/>
        <end position="1709"/>
    </location>
</feature>
<feature type="repeat" description="Spectrin 16" evidence="2">
    <location>
        <begin position="1712"/>
        <end position="1815"/>
    </location>
</feature>
<feature type="repeat" description="Spectrin 17" evidence="2">
    <location>
        <begin position="1818"/>
        <end position="1921"/>
    </location>
</feature>
<feature type="repeat" description="Spectrin 18" evidence="2">
    <location>
        <begin position="1924"/>
        <end position="2029"/>
    </location>
</feature>
<feature type="repeat" description="Spectrin 19" evidence="2">
    <location>
        <begin position="2040"/>
        <end position="2142"/>
    </location>
</feature>
<feature type="repeat" description="Spectrin 20" evidence="2">
    <location>
        <begin position="2154"/>
        <end position="2254"/>
    </location>
</feature>
<feature type="domain" description="EF-hand 1" evidence="4">
    <location>
        <begin position="2267"/>
        <end position="2302"/>
    </location>
</feature>
<feature type="domain" description="EF-hand 2" evidence="4">
    <location>
        <begin position="2310"/>
        <end position="2345"/>
    </location>
</feature>
<feature type="domain" description="EF-hand 3" evidence="4">
    <location>
        <begin position="2347"/>
        <end position="2382"/>
    </location>
</feature>
<feature type="binding site" evidence="5">
    <location>
        <position position="2280"/>
    </location>
    <ligand>
        <name>Ca(2+)</name>
        <dbReference type="ChEBI" id="CHEBI:29108"/>
        <label>1</label>
    </ligand>
</feature>
<feature type="binding site" evidence="5">
    <location>
        <position position="2282"/>
    </location>
    <ligand>
        <name>Ca(2+)</name>
        <dbReference type="ChEBI" id="CHEBI:29108"/>
        <label>1</label>
    </ligand>
</feature>
<feature type="binding site" evidence="5">
    <location>
        <position position="2284"/>
    </location>
    <ligand>
        <name>Ca(2+)</name>
        <dbReference type="ChEBI" id="CHEBI:29108"/>
        <label>1</label>
    </ligand>
</feature>
<feature type="binding site" evidence="5">
    <location>
        <position position="2286"/>
    </location>
    <ligand>
        <name>Ca(2+)</name>
        <dbReference type="ChEBI" id="CHEBI:29108"/>
        <label>1</label>
    </ligand>
</feature>
<feature type="binding site" evidence="5">
    <location>
        <position position="2291"/>
    </location>
    <ligand>
        <name>Ca(2+)</name>
        <dbReference type="ChEBI" id="CHEBI:29108"/>
        <label>1</label>
    </ligand>
</feature>
<feature type="binding site" evidence="5">
    <location>
        <position position="2323"/>
    </location>
    <ligand>
        <name>Ca(2+)</name>
        <dbReference type="ChEBI" id="CHEBI:29108"/>
        <label>2</label>
    </ligand>
</feature>
<feature type="binding site" evidence="5">
    <location>
        <position position="2329"/>
    </location>
    <ligand>
        <name>Ca(2+)</name>
        <dbReference type="ChEBI" id="CHEBI:29108"/>
        <label>2</label>
    </ligand>
</feature>
<feature type="binding site" evidence="5">
    <location>
        <position position="2334"/>
    </location>
    <ligand>
        <name>Ca(2+)</name>
        <dbReference type="ChEBI" id="CHEBI:29108"/>
        <label>2</label>
    </ligand>
</feature>
<feature type="modified residue" description="Phosphoserine" evidence="6">
    <location>
        <position position="257"/>
    </location>
</feature>
<feature type="modified residue" description="Phosphoserine" evidence="1">
    <location>
        <position position="990"/>
    </location>
</feature>
<feature type="modified residue" description="Phosphoserine" evidence="1">
    <location>
        <position position="1972"/>
    </location>
</feature>
<feature type="sequence conflict" description="In Ref. 1; AAB47540." evidence="5" ref="1">
    <original>P</original>
    <variation>L</variation>
    <location>
        <position position="337"/>
    </location>
</feature>
<feature type="sequence conflict" description="In Ref. 4; AAI50748." evidence="5" ref="4">
    <original>D</original>
    <variation>Y</variation>
    <location>
        <position position="501"/>
    </location>
</feature>
<feature type="sequence conflict" description="In Ref. 1; AAB47540." evidence="5" ref="1">
    <original>G</original>
    <variation>V</variation>
    <location>
        <position position="716"/>
    </location>
</feature>
<feature type="sequence conflict" description="In Ref. 1; AAB47540 and 4; AAI50748." evidence="5" ref="1 4">
    <original>V</original>
    <variation>M</variation>
    <location>
        <position position="741"/>
    </location>
</feature>
<feature type="sequence conflict" description="In Ref. 1; AAB47540 and 4; AAI50748." evidence="5" ref="1 4">
    <original>RQ</original>
    <variation>QR</variation>
    <location>
        <begin position="1044"/>
        <end position="1045"/>
    </location>
</feature>
<feature type="sequence conflict" description="In Ref. 1; AAB47540." evidence="5" ref="1">
    <original>V</original>
    <variation>C</variation>
    <location>
        <position position="1225"/>
    </location>
</feature>
<feature type="sequence conflict" description="In Ref. 1; AAB47540." evidence="5" ref="1">
    <original>T</original>
    <variation>N</variation>
    <location>
        <position position="1238"/>
    </location>
</feature>
<feature type="sequence conflict" description="In Ref. 1; AAB47540." evidence="5" ref="1">
    <original>N</original>
    <variation>D</variation>
    <location>
        <position position="1425"/>
    </location>
</feature>
<feature type="sequence conflict" description="In Ref. 1; AAB47540." evidence="5" ref="1">
    <original>K</original>
    <variation>M</variation>
    <location>
        <position position="1582"/>
    </location>
</feature>
<feature type="sequence conflict" description="In Ref. 1; AAB47540 and 4; AAI50748." evidence="5" ref="1 4">
    <original>L</original>
    <variation>M</variation>
    <location>
        <position position="2062"/>
    </location>
</feature>
<keyword id="KW-0117">Actin capping</keyword>
<keyword id="KW-0009">Actin-binding</keyword>
<keyword id="KW-0106">Calcium</keyword>
<keyword id="KW-0133">Cell shape</keyword>
<keyword id="KW-0963">Cytoplasm</keyword>
<keyword id="KW-0206">Cytoskeleton</keyword>
<keyword id="KW-0479">Metal-binding</keyword>
<keyword id="KW-0597">Phosphoprotein</keyword>
<keyword id="KW-1185">Reference proteome</keyword>
<keyword id="KW-0677">Repeat</keyword>
<keyword id="KW-0728">SH3 domain</keyword>
<sequence>METPKETAVESSGPKVLETAEEIQHRRAEVLNQYQRFKDRVAERGQKLEESYHYQVFRRDADDLEKWIMEKLEIAKDKTYEPTNIQGKYQKHESFVSEVQAKSRVLPELEEIREARFAEDHFAHEATKTHLKQLRLLWDLLLELTQEKSDVLLRALKFYQYSQECEDILEWVKEKEAIVTLVELGDDWERTEVLHKKFEEFQEELTARKGKVDRVNQYANECAQEKHPKLPEIKAKQDEVNAAWDRLWSLALKRRESLSNAADLQRFKRDVNEAIQWMEEKEPQLTSEDYGKDLVSSEALFHNHKRLERNLAVMDDKVKELCAKADKLMISHSADAPQIQQMKLDLVSNWERIRALATNRYAKLKASYGYHRFLSDYDELSGWMKEKTALINADELPTDVASGEALLARHQQHKHEIDSYDDRFQSADATGQELLDGNHEASEEIREKMTILANDWAALLELWDKCQHQYRQCLDFHLFYRDSEQVDSWMSRQEAFLENEDLGNSVGSVEALLQKHDDFEEAFTAQEEKIITLDETATKLIDNDHYDSENIAAIRDGLLARRDALRERAATRRKLLVDSQLLQQLYQDSDDLKTWINKKKKLADDDDYKDVQNLKSRVQKQQDFEEELAVNEIMLNNLEKTGQEMIEDGHYASEAVAARLSEVANLWKELLEATAQKGTQLYEANQLLQFENNAEDLKRWLEEVEWQVTSEDYGKGLADVQNLLRKHGLLESDVTARQNQVDTLTDMAAHFEEIGHPDSGDIRARQESLLSRFEALKEPLAIRKKKLIDLLKLQQICRDSEDEEAWIQETEPSAASTHLGKDLVAAKNLLNRHEVILADIASHEPRIQVITERGNKMVEEGHFAAEDIASRVESLNKNMESLHARAIRRENDLKANVQLQQYLADLHEAEAWIKEKEPIVDNKNYGADEEAAGALLKKHEAFLVDLNAFENSIKALRDQAEVCQQQQAAPVDEAGREARVIALYDFEARSRREVSMKKNDVLTLLSSINKDWWKVEADDHQGFVPAVYVRKLAPDELPGFPQHRQEEPVNIPQLQQQVETLYHSLLDRAEERRRRLLQRYNEFLLAYEAGDMLEWIQEKKTENTGVELDDVWELQKKFDEFQRDLKSNEPRLKDINKVADELLFEELLTPEGAHIRQELNTRWNSLKRLADEQYQLLSSAHAVEMFHREADDVKEQIDKKCRALNAADPGSDLLSVQALQRQHEVFERDIIPLGEKVTTLGETAERLCESHPDATEDLQKQRTELNEAWDTLQGLTSDRKESLNEAHKFFLFLSKASDLENWIKTIGGVISSPELAEDLTGTEILLERHQEHHDDIKREDPTFQALEDFGTELIDSGHRNRREIDNTLQNINSKRDNLEKSWENRKKMLDQCLELQLFRGKCDQVESWMVARENSLRSDDRDHLNSLQALMKKRDDLDKAITAQEGKISDLENVATRLIDNDHYAKEEIAARLQRVLDRWKALKEQLLTELGKLGDYADLKQFYRDLEDLEEWINEMLPIACDESYKDPTNIQRKYLKHQAFENEVNGRAEQVDGVINLGNSLIERRVCDGDEENMQEQLDKLKENWDYLLERTTDKGQKLNEASRQQRFNTSIRDFEFWLSEAEGLLAMKDQARDLTSAGNLLKKHQLLEAEMLAREDPLKDLNDLAQELISSGTFNIDQIEEKMNGVNERFENVQSLAAAHHEKLKETYALFQFFQDLDDEEAWIEEKLLRVSSQDYGRDLQSVQNLLKKHKRLEGELVAHEPAVQNVLDTAESLRDKAAVGKEEIQERLAQFVQHWEKLKELAKTRGVNLEESLEYLQFMENAEEEEAWLGEKCALVSRGDSGDTLAATQSLLKKHEALENDFAVHKNRVQDVCAQGEDILNKEETQNKDKISTKIQVLNEKTASLAKALAAWKSQLDDVHAFQQFNWKADVVESWIGEKEASLKTKSNGADLTAFLTLLAKHDTLDASLQSFQQERLSEIAELKDQLVAGEHSQAKAIEEQHAALLRHWEQLLEASRVHRQKLLEKQLPLQKAEELFMEFAHKASAFNNWCENAEEDLSEPVHCVSLNEIRQLQKEHEAFLASLAGAQEDFNYLLELDKQIKALNVPSSPYTWLTVDVLGRIWNHLPDIIKEREQELQKEEARQIKNFEMCQEFEQNASAFLQWIQETRAYFLDGSLLKETGTLESQLEANKRKQKEIQAMKRHLTKIEDLGDSMEEALILDIKYSTIGLAQQWDQLHQLGMRMQHNLEQQIQAKDTIGVSEETLKEFSTTYKHFDENLTGRLTHKEFRSCLRGLNYYLPMVEEGEPEPKFEKFLNAVDPGRKGYVSLEDYTSFLIDKESENIKTSDDIESAFQALAEGKAYITKEDMKQALTPEQVSFCTIHMQQYMDPRGRSQPAGYDYVGFTNSFFGN</sequence>
<dbReference type="EMBL" id="U87455">
    <property type="protein sequence ID" value="AAB47540.1"/>
    <property type="molecule type" value="mRNA"/>
</dbReference>
<dbReference type="EMBL" id="AF093576">
    <property type="protein sequence ID" value="AAC61874.1"/>
    <property type="molecule type" value="mRNA"/>
</dbReference>
<dbReference type="EMBL" id="AC113483">
    <property type="status" value="NOT_ANNOTATED_CDS"/>
    <property type="molecule type" value="mRNA"/>
</dbReference>
<dbReference type="EMBL" id="AC156549">
    <property type="status" value="NOT_ANNOTATED_CDS"/>
    <property type="molecule type" value="mRNA"/>
</dbReference>
<dbReference type="EMBL" id="BC150747">
    <property type="protein sequence ID" value="AAI50748.1"/>
    <property type="molecule type" value="mRNA"/>
</dbReference>
<dbReference type="EMBL" id="M10276">
    <property type="protein sequence ID" value="AAA40123.1"/>
    <property type="molecule type" value="mRNA"/>
</dbReference>
<dbReference type="CCDS" id="CCDS35795.1"/>
<dbReference type="PIR" id="A05283">
    <property type="entry name" value="A05283"/>
</dbReference>
<dbReference type="RefSeq" id="NP_035595.2">
    <property type="nucleotide sequence ID" value="NM_011465.4"/>
</dbReference>
<dbReference type="SMR" id="P08032"/>
<dbReference type="BioGRID" id="203458">
    <property type="interactions" value="10"/>
</dbReference>
<dbReference type="FunCoup" id="P08032">
    <property type="interactions" value="104"/>
</dbReference>
<dbReference type="IntAct" id="P08032">
    <property type="interactions" value="6"/>
</dbReference>
<dbReference type="MINT" id="P08032"/>
<dbReference type="STRING" id="10090.ENSMUSP00000027817"/>
<dbReference type="GlyGen" id="P08032">
    <property type="glycosylation" value="2 sites, 1 N-linked glycan (1 site), 1 O-linked glycan (1 site)"/>
</dbReference>
<dbReference type="iPTMnet" id="P08032"/>
<dbReference type="PhosphoSitePlus" id="P08032"/>
<dbReference type="SwissPalm" id="P08032"/>
<dbReference type="jPOST" id="P08032"/>
<dbReference type="PaxDb" id="10090-ENSMUSP00000027817"/>
<dbReference type="PeptideAtlas" id="P08032"/>
<dbReference type="ProteomicsDB" id="261579"/>
<dbReference type="Antibodypedia" id="10818">
    <property type="antibodies" value="189 antibodies from 29 providers"/>
</dbReference>
<dbReference type="DNASU" id="20739"/>
<dbReference type="Ensembl" id="ENSMUST00000027817.8">
    <property type="protein sequence ID" value="ENSMUSP00000027817.8"/>
    <property type="gene ID" value="ENSMUSG00000026532.8"/>
</dbReference>
<dbReference type="GeneID" id="20739"/>
<dbReference type="KEGG" id="mmu:20739"/>
<dbReference type="UCSC" id="uc007dsw.2">
    <property type="organism name" value="mouse"/>
</dbReference>
<dbReference type="AGR" id="MGI:98385"/>
<dbReference type="CTD" id="6708"/>
<dbReference type="MGI" id="MGI:98385">
    <property type="gene designation" value="Spta1"/>
</dbReference>
<dbReference type="VEuPathDB" id="HostDB:ENSMUSG00000026532"/>
<dbReference type="eggNOG" id="KOG0040">
    <property type="taxonomic scope" value="Eukaryota"/>
</dbReference>
<dbReference type="GeneTree" id="ENSGT00940000161240"/>
<dbReference type="HOGENOM" id="CLU_000847_0_0_1"/>
<dbReference type="InParanoid" id="P08032"/>
<dbReference type="OMA" id="QMFHREA"/>
<dbReference type="OrthoDB" id="6018565at2759"/>
<dbReference type="PhylomeDB" id="P08032"/>
<dbReference type="TreeFam" id="TF343803"/>
<dbReference type="Reactome" id="R-MMU-375165">
    <property type="pathway name" value="NCAM signaling for neurite out-growth"/>
</dbReference>
<dbReference type="Reactome" id="R-MMU-445095">
    <property type="pathway name" value="Interaction between L1 and Ankyrins"/>
</dbReference>
<dbReference type="Reactome" id="R-MMU-5673001">
    <property type="pathway name" value="RAF/MAP kinase cascade"/>
</dbReference>
<dbReference type="Reactome" id="R-MMU-6807878">
    <property type="pathway name" value="COPI-mediated anterograde transport"/>
</dbReference>
<dbReference type="BioGRID-ORCS" id="20739">
    <property type="hits" value="2 hits in 77 CRISPR screens"/>
</dbReference>
<dbReference type="PRO" id="PR:P08032"/>
<dbReference type="Proteomes" id="UP000000589">
    <property type="component" value="Chromosome 1"/>
</dbReference>
<dbReference type="RNAct" id="P08032">
    <property type="molecule type" value="protein"/>
</dbReference>
<dbReference type="Bgee" id="ENSMUSG00000026532">
    <property type="expression patterns" value="Expressed in fetal liver hematopoietic progenitor cell and 80 other cell types or tissues"/>
</dbReference>
<dbReference type="GO" id="GO:0030424">
    <property type="term" value="C:axon"/>
    <property type="evidence" value="ECO:0007669"/>
    <property type="project" value="Ensembl"/>
</dbReference>
<dbReference type="GO" id="GO:0030863">
    <property type="term" value="C:cortical cytoskeleton"/>
    <property type="evidence" value="ECO:0000314"/>
    <property type="project" value="MGI"/>
</dbReference>
<dbReference type="GO" id="GO:0032437">
    <property type="term" value="C:cuticular plate"/>
    <property type="evidence" value="ECO:0000314"/>
    <property type="project" value="MGI"/>
</dbReference>
<dbReference type="GO" id="GO:0009898">
    <property type="term" value="C:cytoplasmic side of plasma membrane"/>
    <property type="evidence" value="ECO:0007669"/>
    <property type="project" value="Ensembl"/>
</dbReference>
<dbReference type="GO" id="GO:0016020">
    <property type="term" value="C:membrane"/>
    <property type="evidence" value="ECO:0000314"/>
    <property type="project" value="MGI"/>
</dbReference>
<dbReference type="GO" id="GO:0008091">
    <property type="term" value="C:spectrin"/>
    <property type="evidence" value="ECO:0000315"/>
    <property type="project" value="MGI"/>
</dbReference>
<dbReference type="GO" id="GO:0014731">
    <property type="term" value="C:spectrin-associated cytoskeleton"/>
    <property type="evidence" value="ECO:0000315"/>
    <property type="project" value="MGI"/>
</dbReference>
<dbReference type="GO" id="GO:0003779">
    <property type="term" value="F:actin binding"/>
    <property type="evidence" value="ECO:0007669"/>
    <property type="project" value="UniProtKB-KW"/>
</dbReference>
<dbReference type="GO" id="GO:0005509">
    <property type="term" value="F:calcium ion binding"/>
    <property type="evidence" value="ECO:0007669"/>
    <property type="project" value="InterPro"/>
</dbReference>
<dbReference type="GO" id="GO:0030036">
    <property type="term" value="P:actin cytoskeleton organization"/>
    <property type="evidence" value="ECO:0000315"/>
    <property type="project" value="MGI"/>
</dbReference>
<dbReference type="GO" id="GO:0051693">
    <property type="term" value="P:actin filament capping"/>
    <property type="evidence" value="ECO:0007669"/>
    <property type="project" value="UniProtKB-KW"/>
</dbReference>
<dbReference type="GO" id="GO:0030097">
    <property type="term" value="P:hemopoiesis"/>
    <property type="evidence" value="ECO:0000315"/>
    <property type="project" value="MGI"/>
</dbReference>
<dbReference type="GO" id="GO:0002260">
    <property type="term" value="P:lymphocyte homeostasis"/>
    <property type="evidence" value="ECO:0000315"/>
    <property type="project" value="MGI"/>
</dbReference>
<dbReference type="GO" id="GO:0007009">
    <property type="term" value="P:plasma membrane organization"/>
    <property type="evidence" value="ECO:0000315"/>
    <property type="project" value="MGI"/>
</dbReference>
<dbReference type="GO" id="GO:0006779">
    <property type="term" value="P:porphyrin-containing compound biosynthetic process"/>
    <property type="evidence" value="ECO:0000315"/>
    <property type="project" value="MGI"/>
</dbReference>
<dbReference type="GO" id="GO:0042102">
    <property type="term" value="P:positive regulation of T cell proliferation"/>
    <property type="evidence" value="ECO:0000315"/>
    <property type="project" value="MGI"/>
</dbReference>
<dbReference type="GO" id="GO:0008360">
    <property type="term" value="P:regulation of cell shape"/>
    <property type="evidence" value="ECO:0000315"/>
    <property type="project" value="MGI"/>
</dbReference>
<dbReference type="CDD" id="cd00176">
    <property type="entry name" value="SPEC"/>
    <property type="match status" value="11"/>
</dbReference>
<dbReference type="FunFam" id="1.20.58.60:FF:000007">
    <property type="entry name" value="Spectrin alpha chain non-erythrocytic 1"/>
    <property type="match status" value="2"/>
</dbReference>
<dbReference type="FunFam" id="1.20.58.60:FF:000272">
    <property type="entry name" value="Spectrin alpha chain, erythrocytic 1"/>
    <property type="match status" value="1"/>
</dbReference>
<dbReference type="FunFam" id="1.20.58.60:FF:000448">
    <property type="entry name" value="Spectrin alpha chain, erythrocytic 1"/>
    <property type="match status" value="1"/>
</dbReference>
<dbReference type="FunFam" id="1.20.58.60:FF:000163">
    <property type="entry name" value="spectrin alpha chain, erythrocytic 1"/>
    <property type="match status" value="1"/>
</dbReference>
<dbReference type="FunFam" id="1.20.58.60:FF:000017">
    <property type="entry name" value="Spectrin alpha chain, non-erythrocytic 1"/>
    <property type="match status" value="2"/>
</dbReference>
<dbReference type="FunFam" id="1.20.58.60:FF:000020">
    <property type="entry name" value="Spectrin alpha chain, non-erythrocytic 1"/>
    <property type="match status" value="8"/>
</dbReference>
<dbReference type="FunFam" id="1.20.58.60:FF:000078">
    <property type="entry name" value="Spectrin alpha chain, non-erythrocytic 1"/>
    <property type="match status" value="1"/>
</dbReference>
<dbReference type="FunFam" id="1.10.238.10:FF:000020">
    <property type="entry name" value="spectrin alpha chain, non-erythrocytic 1"/>
    <property type="match status" value="1"/>
</dbReference>
<dbReference type="Gene3D" id="1.20.5.170">
    <property type="match status" value="1"/>
</dbReference>
<dbReference type="Gene3D" id="1.20.58.60">
    <property type="match status" value="19"/>
</dbReference>
<dbReference type="Gene3D" id="1.10.238.10">
    <property type="entry name" value="EF-hand"/>
    <property type="match status" value="2"/>
</dbReference>
<dbReference type="Gene3D" id="2.30.30.40">
    <property type="entry name" value="SH3 Domains"/>
    <property type="match status" value="1"/>
</dbReference>
<dbReference type="InterPro" id="IPR011992">
    <property type="entry name" value="EF-hand-dom_pair"/>
</dbReference>
<dbReference type="InterPro" id="IPR014837">
    <property type="entry name" value="EF-hand_Ca_insen"/>
</dbReference>
<dbReference type="InterPro" id="IPR002048">
    <property type="entry name" value="EF_hand_dom"/>
</dbReference>
<dbReference type="InterPro" id="IPR036028">
    <property type="entry name" value="SH3-like_dom_sf"/>
</dbReference>
<dbReference type="InterPro" id="IPR001452">
    <property type="entry name" value="SH3_domain"/>
</dbReference>
<dbReference type="InterPro" id="IPR018159">
    <property type="entry name" value="Spectrin/alpha-actinin"/>
</dbReference>
<dbReference type="InterPro" id="IPR002017">
    <property type="entry name" value="Spectrin_repeat"/>
</dbReference>
<dbReference type="PANTHER" id="PTHR11915">
    <property type="entry name" value="SPECTRIN/FILAMIN RELATED CYTOSKELETAL PROTEIN"/>
    <property type="match status" value="1"/>
</dbReference>
<dbReference type="Pfam" id="PF08726">
    <property type="entry name" value="EFhand_Ca_insen"/>
    <property type="match status" value="1"/>
</dbReference>
<dbReference type="Pfam" id="PF00018">
    <property type="entry name" value="SH3_1"/>
    <property type="match status" value="1"/>
</dbReference>
<dbReference type="Pfam" id="PF00435">
    <property type="entry name" value="Spectrin"/>
    <property type="match status" value="20"/>
</dbReference>
<dbReference type="PRINTS" id="PR01887">
    <property type="entry name" value="SPECTRNALPHA"/>
</dbReference>
<dbReference type="SMART" id="SM01184">
    <property type="entry name" value="efhand_Ca_insen"/>
    <property type="match status" value="1"/>
</dbReference>
<dbReference type="SMART" id="SM00326">
    <property type="entry name" value="SH3"/>
    <property type="match status" value="1"/>
</dbReference>
<dbReference type="SMART" id="SM00150">
    <property type="entry name" value="SPEC"/>
    <property type="match status" value="20"/>
</dbReference>
<dbReference type="SUPFAM" id="SSF47473">
    <property type="entry name" value="EF-hand"/>
    <property type="match status" value="1"/>
</dbReference>
<dbReference type="SUPFAM" id="SSF50044">
    <property type="entry name" value="SH3-domain"/>
    <property type="match status" value="1"/>
</dbReference>
<dbReference type="SUPFAM" id="SSF46966">
    <property type="entry name" value="Spectrin repeat"/>
    <property type="match status" value="16"/>
</dbReference>
<dbReference type="PROSITE" id="PS50222">
    <property type="entry name" value="EF_HAND_2"/>
    <property type="match status" value="3"/>
</dbReference>
<dbReference type="PROSITE" id="PS50002">
    <property type="entry name" value="SH3"/>
    <property type="match status" value="1"/>
</dbReference>
<protein>
    <recommendedName>
        <fullName>Spectrin alpha chain, erythrocytic 1</fullName>
    </recommendedName>
    <alternativeName>
        <fullName>Erythroid alpha-spectrin</fullName>
    </alternativeName>
</protein>
<evidence type="ECO:0000250" key="1">
    <source>
        <dbReference type="UniProtKB" id="P02549"/>
    </source>
</evidence>
<evidence type="ECO:0000255" key="2"/>
<evidence type="ECO:0000255" key="3">
    <source>
        <dbReference type="PROSITE-ProRule" id="PRU00192"/>
    </source>
</evidence>
<evidence type="ECO:0000255" key="4">
    <source>
        <dbReference type="PROSITE-ProRule" id="PRU00448"/>
    </source>
</evidence>
<evidence type="ECO:0000305" key="5"/>
<evidence type="ECO:0007744" key="6">
    <source>
    </source>
</evidence>
<proteinExistence type="evidence at protein level"/>
<organism>
    <name type="scientific">Mus musculus</name>
    <name type="common">Mouse</name>
    <dbReference type="NCBI Taxonomy" id="10090"/>
    <lineage>
        <taxon>Eukaryota</taxon>
        <taxon>Metazoa</taxon>
        <taxon>Chordata</taxon>
        <taxon>Craniata</taxon>
        <taxon>Vertebrata</taxon>
        <taxon>Euteleostomi</taxon>
        <taxon>Mammalia</taxon>
        <taxon>Eutheria</taxon>
        <taxon>Euarchontoglires</taxon>
        <taxon>Glires</taxon>
        <taxon>Rodentia</taxon>
        <taxon>Myomorpha</taxon>
        <taxon>Muroidea</taxon>
        <taxon>Muridae</taxon>
        <taxon>Murinae</taxon>
        <taxon>Mus</taxon>
        <taxon>Mus</taxon>
    </lineage>
</organism>
<accession>P08032</accession>
<accession>B2RWX6</accession>
<accession>P97502</accession>